<keyword id="KW-0067">ATP-binding</keyword>
<keyword id="KW-0963">Cytoplasm</keyword>
<keyword id="KW-0324">Glycolysis</keyword>
<keyword id="KW-0418">Kinase</keyword>
<keyword id="KW-0547">Nucleotide-binding</keyword>
<keyword id="KW-0808">Transferase</keyword>
<name>GLK_BRUME</name>
<protein>
    <recommendedName>
        <fullName evidence="1">Glucokinase</fullName>
        <ecNumber evidence="1">2.7.1.2</ecNumber>
    </recommendedName>
    <alternativeName>
        <fullName evidence="1">Glucose kinase</fullName>
    </alternativeName>
</protein>
<evidence type="ECO:0000255" key="1">
    <source>
        <dbReference type="HAMAP-Rule" id="MF_00524"/>
    </source>
</evidence>
<evidence type="ECO:0000305" key="2"/>
<organism>
    <name type="scientific">Brucella melitensis biotype 1 (strain ATCC 23456 / CCUG 17765 / NCTC 10094 / 16M)</name>
    <dbReference type="NCBI Taxonomy" id="224914"/>
    <lineage>
        <taxon>Bacteria</taxon>
        <taxon>Pseudomonadati</taxon>
        <taxon>Pseudomonadota</taxon>
        <taxon>Alphaproteobacteria</taxon>
        <taxon>Hyphomicrobiales</taxon>
        <taxon>Brucellaceae</taxon>
        <taxon>Brucella/Ochrobactrum group</taxon>
        <taxon>Brucella</taxon>
    </lineage>
</organism>
<reference key="1">
    <citation type="journal article" date="2002" name="Proc. Natl. Acad. Sci. U.S.A.">
        <title>The genome sequence of the facultative intracellular pathogen Brucella melitensis.</title>
        <authorList>
            <person name="DelVecchio V.G."/>
            <person name="Kapatral V."/>
            <person name="Redkar R.J."/>
            <person name="Patra G."/>
            <person name="Mujer C."/>
            <person name="Los T."/>
            <person name="Ivanova N."/>
            <person name="Anderson I."/>
            <person name="Bhattacharyya A."/>
            <person name="Lykidis A."/>
            <person name="Reznik G."/>
            <person name="Jablonski L."/>
            <person name="Larsen N."/>
            <person name="D'Souza M."/>
            <person name="Bernal A."/>
            <person name="Mazur M."/>
            <person name="Goltsman E."/>
            <person name="Selkov E."/>
            <person name="Elzer P.H."/>
            <person name="Hagius S."/>
            <person name="O'Callaghan D."/>
            <person name="Letesson J.-J."/>
            <person name="Haselkorn R."/>
            <person name="Kyrpides N.C."/>
            <person name="Overbeek R."/>
        </authorList>
    </citation>
    <scope>NUCLEOTIDE SEQUENCE [LARGE SCALE GENOMIC DNA]</scope>
    <source>
        <strain>ATCC 23456 / CCUG 17765 / NCTC 10094 / 16M</strain>
    </source>
</reference>
<feature type="chain" id="PRO_0000215121" description="Glucokinase">
    <location>
        <begin position="1"/>
        <end position="343"/>
    </location>
</feature>
<feature type="binding site" evidence="1">
    <location>
        <begin position="18"/>
        <end position="23"/>
    </location>
    <ligand>
        <name>ATP</name>
        <dbReference type="ChEBI" id="CHEBI:30616"/>
    </ligand>
</feature>
<dbReference type="EC" id="2.7.1.2" evidence="1"/>
<dbReference type="EMBL" id="AE008918">
    <property type="protein sequence ID" value="AAL53492.1"/>
    <property type="status" value="ALT_INIT"/>
    <property type="molecule type" value="Genomic_DNA"/>
</dbReference>
<dbReference type="PIR" id="AI3540">
    <property type="entry name" value="AI3540"/>
</dbReference>
<dbReference type="RefSeq" id="WP_004682470.1">
    <property type="nucleotide sequence ID" value="NZ_GG703779.1"/>
</dbReference>
<dbReference type="SMR" id="Q8YDC6"/>
<dbReference type="GeneID" id="29595726"/>
<dbReference type="KEGG" id="bme:BMEII0251"/>
<dbReference type="KEGG" id="bmel:DK63_2990"/>
<dbReference type="PATRIC" id="fig|224914.52.peg.3136"/>
<dbReference type="eggNOG" id="COG0837">
    <property type="taxonomic scope" value="Bacteria"/>
</dbReference>
<dbReference type="PhylomeDB" id="Q8YDC6"/>
<dbReference type="Proteomes" id="UP000000419">
    <property type="component" value="Chromosome II"/>
</dbReference>
<dbReference type="GO" id="GO:0005829">
    <property type="term" value="C:cytosol"/>
    <property type="evidence" value="ECO:0007669"/>
    <property type="project" value="TreeGrafter"/>
</dbReference>
<dbReference type="GO" id="GO:0005524">
    <property type="term" value="F:ATP binding"/>
    <property type="evidence" value="ECO:0007669"/>
    <property type="project" value="UniProtKB-UniRule"/>
</dbReference>
<dbReference type="GO" id="GO:0005536">
    <property type="term" value="F:D-glucose binding"/>
    <property type="evidence" value="ECO:0007669"/>
    <property type="project" value="InterPro"/>
</dbReference>
<dbReference type="GO" id="GO:0004340">
    <property type="term" value="F:glucokinase activity"/>
    <property type="evidence" value="ECO:0007669"/>
    <property type="project" value="UniProtKB-UniRule"/>
</dbReference>
<dbReference type="GO" id="GO:0006096">
    <property type="term" value="P:glycolytic process"/>
    <property type="evidence" value="ECO:0007669"/>
    <property type="project" value="UniProtKB-UniRule"/>
</dbReference>
<dbReference type="CDD" id="cd24008">
    <property type="entry name" value="ASKHA_NBD_GLK"/>
    <property type="match status" value="1"/>
</dbReference>
<dbReference type="Gene3D" id="3.30.420.40">
    <property type="match status" value="1"/>
</dbReference>
<dbReference type="Gene3D" id="3.40.367.20">
    <property type="match status" value="1"/>
</dbReference>
<dbReference type="HAMAP" id="MF_00524">
    <property type="entry name" value="Glucokinase"/>
    <property type="match status" value="1"/>
</dbReference>
<dbReference type="InterPro" id="IPR043129">
    <property type="entry name" value="ATPase_NBD"/>
</dbReference>
<dbReference type="InterPro" id="IPR050201">
    <property type="entry name" value="Bacterial_glucokinase"/>
</dbReference>
<dbReference type="InterPro" id="IPR003836">
    <property type="entry name" value="Glucokinase"/>
</dbReference>
<dbReference type="NCBIfam" id="TIGR00749">
    <property type="entry name" value="glk"/>
    <property type="match status" value="1"/>
</dbReference>
<dbReference type="NCBIfam" id="NF001417">
    <property type="entry name" value="PRK00292.1-4"/>
    <property type="match status" value="1"/>
</dbReference>
<dbReference type="PANTHER" id="PTHR47690">
    <property type="entry name" value="GLUCOKINASE"/>
    <property type="match status" value="1"/>
</dbReference>
<dbReference type="PANTHER" id="PTHR47690:SF1">
    <property type="entry name" value="GLUCOKINASE"/>
    <property type="match status" value="1"/>
</dbReference>
<dbReference type="Pfam" id="PF02685">
    <property type="entry name" value="Glucokinase"/>
    <property type="match status" value="1"/>
</dbReference>
<dbReference type="SUPFAM" id="SSF53067">
    <property type="entry name" value="Actin-like ATPase domain"/>
    <property type="match status" value="1"/>
</dbReference>
<sequence length="343" mass="36919">MQAIIDAEQSFKFPVLVGDIGGTNARFSILVDSNAEPKEFPVLQTADYATIDEAIQHAILDQTAIQPRSVILAVAGPVDGDEIDLTNCDWVVRPKKMIADLGFEDVTVLNDFEAQALAVVSLEGHHMEQIGGKPEEAVATRVVLGPGTGLGVAGLVCTRHAWVPVPGEGGHIDIGPRTERDYQIFPHIERIEGRVTGEQILSGRGLRNLYLGICAADKITPTLETPVDITSAGLDGSNPQAAETLDLFATYLGRLAGDLALIFMAHGGVYLSGGIPVRILSALKAGSFRAAFEDKAPNKAIMRDIPVRVITYQLAALTGLSAFARTPSRFEVSTEGRRWRMRR</sequence>
<proteinExistence type="inferred from homology"/>
<gene>
    <name evidence="1" type="primary">glk</name>
    <name type="ordered locus">BMEII0251</name>
</gene>
<comment type="catalytic activity">
    <reaction evidence="1">
        <text>D-glucose + ATP = D-glucose 6-phosphate + ADP + H(+)</text>
        <dbReference type="Rhea" id="RHEA:17825"/>
        <dbReference type="ChEBI" id="CHEBI:4167"/>
        <dbReference type="ChEBI" id="CHEBI:15378"/>
        <dbReference type="ChEBI" id="CHEBI:30616"/>
        <dbReference type="ChEBI" id="CHEBI:61548"/>
        <dbReference type="ChEBI" id="CHEBI:456216"/>
        <dbReference type="EC" id="2.7.1.2"/>
    </reaction>
</comment>
<comment type="subcellular location">
    <subcellularLocation>
        <location evidence="1">Cytoplasm</location>
    </subcellularLocation>
</comment>
<comment type="similarity">
    <text evidence="1">Belongs to the bacterial glucokinase family.</text>
</comment>
<comment type="sequence caution" evidence="2">
    <conflict type="erroneous initiation">
        <sequence resource="EMBL-CDS" id="AAL53492"/>
    </conflict>
</comment>
<accession>Q8YDC6</accession>